<keyword id="KW-0520">NAD</keyword>
<keyword id="KW-0560">Oxidoreductase</keyword>
<keyword id="KW-0816">Tricarboxylic acid cycle</keyword>
<gene>
    <name evidence="1" type="primary">mdh</name>
    <name type="ordered locus">CCA_00734</name>
</gene>
<proteinExistence type="inferred from homology"/>
<evidence type="ECO:0000255" key="1">
    <source>
        <dbReference type="HAMAP-Rule" id="MF_01517"/>
    </source>
</evidence>
<organism>
    <name type="scientific">Chlamydia caviae (strain ATCC VR-813 / DSM 19441 / 03DC25 / GPIC)</name>
    <name type="common">Chlamydophila caviae</name>
    <dbReference type="NCBI Taxonomy" id="227941"/>
    <lineage>
        <taxon>Bacteria</taxon>
        <taxon>Pseudomonadati</taxon>
        <taxon>Chlamydiota</taxon>
        <taxon>Chlamydiia</taxon>
        <taxon>Chlamydiales</taxon>
        <taxon>Chlamydiaceae</taxon>
        <taxon>Chlamydia/Chlamydophila group</taxon>
        <taxon>Chlamydia</taxon>
    </lineage>
</organism>
<comment type="function">
    <text evidence="1">Catalyzes the reversible oxidation of malate to oxaloacetate.</text>
</comment>
<comment type="catalytic activity">
    <reaction evidence="1">
        <text>(S)-malate + NAD(+) = oxaloacetate + NADH + H(+)</text>
        <dbReference type="Rhea" id="RHEA:21432"/>
        <dbReference type="ChEBI" id="CHEBI:15378"/>
        <dbReference type="ChEBI" id="CHEBI:15589"/>
        <dbReference type="ChEBI" id="CHEBI:16452"/>
        <dbReference type="ChEBI" id="CHEBI:57540"/>
        <dbReference type="ChEBI" id="CHEBI:57945"/>
        <dbReference type="EC" id="1.1.1.37"/>
    </reaction>
</comment>
<comment type="similarity">
    <text evidence="1">Belongs to the LDH/MDH superfamily. MDH type 2 family.</text>
</comment>
<feature type="chain" id="PRO_0000113356" description="Malate dehydrogenase">
    <location>
        <begin position="1"/>
        <end position="330"/>
    </location>
</feature>
<feature type="active site" description="Proton acceptor" evidence="1">
    <location>
        <position position="191"/>
    </location>
</feature>
<feature type="binding site" evidence="1">
    <location>
        <begin position="15"/>
        <end position="21"/>
    </location>
    <ligand>
        <name>NAD(+)</name>
        <dbReference type="ChEBI" id="CHEBI:57540"/>
    </ligand>
</feature>
<feature type="binding site" evidence="1">
    <location>
        <position position="96"/>
    </location>
    <ligand>
        <name>substrate</name>
    </ligand>
</feature>
<feature type="binding site" evidence="1">
    <location>
        <position position="102"/>
    </location>
    <ligand>
        <name>substrate</name>
    </ligand>
</feature>
<feature type="binding site" evidence="1">
    <location>
        <position position="109"/>
    </location>
    <ligand>
        <name>NAD(+)</name>
        <dbReference type="ChEBI" id="CHEBI:57540"/>
    </ligand>
</feature>
<feature type="binding site" evidence="1">
    <location>
        <position position="116"/>
    </location>
    <ligand>
        <name>NAD(+)</name>
        <dbReference type="ChEBI" id="CHEBI:57540"/>
    </ligand>
</feature>
<feature type="binding site" evidence="1">
    <location>
        <begin position="133"/>
        <end position="135"/>
    </location>
    <ligand>
        <name>NAD(+)</name>
        <dbReference type="ChEBI" id="CHEBI:57540"/>
    </ligand>
</feature>
<feature type="binding site" evidence="1">
    <location>
        <position position="135"/>
    </location>
    <ligand>
        <name>substrate</name>
    </ligand>
</feature>
<feature type="binding site" evidence="1">
    <location>
        <position position="166"/>
    </location>
    <ligand>
        <name>substrate</name>
    </ligand>
</feature>
<sequence>MIMKLMRTVSVAVTGGTGQIAYSFLFALAHGDVFGSDCSIDLRVYDLPGLERALSGVRMELDDCAYPLLQSLRVTTSLEDACDGIDAAFLIGAAPRGPGMERSDLLKRNGEIFSLQGSVLNVCAKRDAKIFVVGNPVNTNCWIAMNKAPKLNRRNFHSMLRLDQNRMHTMLAHRAEVPLDEVTNVVVWGNHSAKQVPDFTQALISGKPAVEVISDRDWLENIMFPSIQNRGSAVIEARGKSSAGSAARALAEAARSIFLPKDGEWFSSGVCSDYNPYGIPDDLIFGFPCRMLPSGDYEIVPGLPWDAFIKNKIQISLDEISQEKASVSLL</sequence>
<protein>
    <recommendedName>
        <fullName evidence="1">Malate dehydrogenase</fullName>
        <ecNumber evidence="1">1.1.1.37</ecNumber>
    </recommendedName>
</protein>
<name>MDH_CHLCV</name>
<reference key="1">
    <citation type="journal article" date="2003" name="Nucleic Acids Res.">
        <title>Genome sequence of Chlamydophila caviae (Chlamydia psittaci GPIC): examining the role of niche-specific genes in the evolution of the Chlamydiaceae.</title>
        <authorList>
            <person name="Read T.D."/>
            <person name="Myers G.S.A."/>
            <person name="Brunham R.C."/>
            <person name="Nelson W.C."/>
            <person name="Paulsen I.T."/>
            <person name="Heidelberg J.F."/>
            <person name="Holtzapple E.K."/>
            <person name="Khouri H.M."/>
            <person name="Federova N.B."/>
            <person name="Carty H.A."/>
            <person name="Umayam L.A."/>
            <person name="Haft D.H."/>
            <person name="Peterson J.D."/>
            <person name="Beanan M.J."/>
            <person name="White O."/>
            <person name="Salzberg S.L."/>
            <person name="Hsia R.-C."/>
            <person name="McClarty G."/>
            <person name="Rank R.G."/>
            <person name="Bavoil P.M."/>
            <person name="Fraser C.M."/>
        </authorList>
    </citation>
    <scope>NUCLEOTIDE SEQUENCE [LARGE SCALE GENOMIC DNA]</scope>
    <source>
        <strain>ATCC VR-813 / DSM 19441 / 03DC25 / GPIC</strain>
    </source>
</reference>
<dbReference type="EC" id="1.1.1.37" evidence="1"/>
<dbReference type="EMBL" id="AE015925">
    <property type="protein sequence ID" value="AAP05475.1"/>
    <property type="molecule type" value="Genomic_DNA"/>
</dbReference>
<dbReference type="SMR" id="Q822E9"/>
<dbReference type="STRING" id="227941.CCA_00734"/>
<dbReference type="KEGG" id="cca:CCA_00734"/>
<dbReference type="eggNOG" id="COG0039">
    <property type="taxonomic scope" value="Bacteria"/>
</dbReference>
<dbReference type="HOGENOM" id="CLU_040727_2_0_0"/>
<dbReference type="Proteomes" id="UP000002193">
    <property type="component" value="Chromosome"/>
</dbReference>
<dbReference type="GO" id="GO:0030060">
    <property type="term" value="F:L-malate dehydrogenase (NAD+) activity"/>
    <property type="evidence" value="ECO:0007669"/>
    <property type="project" value="UniProtKB-UniRule"/>
</dbReference>
<dbReference type="GO" id="GO:0006108">
    <property type="term" value="P:malate metabolic process"/>
    <property type="evidence" value="ECO:0007669"/>
    <property type="project" value="InterPro"/>
</dbReference>
<dbReference type="GO" id="GO:0006099">
    <property type="term" value="P:tricarboxylic acid cycle"/>
    <property type="evidence" value="ECO:0007669"/>
    <property type="project" value="UniProtKB-UniRule"/>
</dbReference>
<dbReference type="FunFam" id="3.40.50.720:FF:000010">
    <property type="entry name" value="Malate dehydrogenase"/>
    <property type="match status" value="1"/>
</dbReference>
<dbReference type="FunFam" id="3.90.110.10:FF:000002">
    <property type="entry name" value="Malate dehydrogenase"/>
    <property type="match status" value="1"/>
</dbReference>
<dbReference type="Gene3D" id="3.90.110.10">
    <property type="entry name" value="Lactate dehydrogenase/glycoside hydrolase, family 4, C-terminal"/>
    <property type="match status" value="1"/>
</dbReference>
<dbReference type="Gene3D" id="3.40.50.720">
    <property type="entry name" value="NAD(P)-binding Rossmann-like Domain"/>
    <property type="match status" value="1"/>
</dbReference>
<dbReference type="HAMAP" id="MF_01517">
    <property type="entry name" value="Malate_dehydrog_2"/>
    <property type="match status" value="1"/>
</dbReference>
<dbReference type="InterPro" id="IPR001557">
    <property type="entry name" value="L-lactate/malate_DH"/>
</dbReference>
<dbReference type="InterPro" id="IPR022383">
    <property type="entry name" value="Lactate/malate_DH_C"/>
</dbReference>
<dbReference type="InterPro" id="IPR001236">
    <property type="entry name" value="Lactate/malate_DH_N"/>
</dbReference>
<dbReference type="InterPro" id="IPR015955">
    <property type="entry name" value="Lactate_DH/Glyco_Ohase_4_C"/>
</dbReference>
<dbReference type="InterPro" id="IPR010945">
    <property type="entry name" value="Malate_DH_type2"/>
</dbReference>
<dbReference type="InterPro" id="IPR036291">
    <property type="entry name" value="NAD(P)-bd_dom_sf"/>
</dbReference>
<dbReference type="NCBIfam" id="TIGR01759">
    <property type="entry name" value="MalateDH-SF1"/>
    <property type="match status" value="1"/>
</dbReference>
<dbReference type="NCBIfam" id="NF003916">
    <property type="entry name" value="PRK05442.1"/>
    <property type="match status" value="1"/>
</dbReference>
<dbReference type="PANTHER" id="PTHR23382">
    <property type="entry name" value="MALATE DEHYDROGENASE"/>
    <property type="match status" value="1"/>
</dbReference>
<dbReference type="Pfam" id="PF02866">
    <property type="entry name" value="Ldh_1_C"/>
    <property type="match status" value="1"/>
</dbReference>
<dbReference type="Pfam" id="PF00056">
    <property type="entry name" value="Ldh_1_N"/>
    <property type="match status" value="1"/>
</dbReference>
<dbReference type="PIRSF" id="PIRSF000102">
    <property type="entry name" value="Lac_mal_DH"/>
    <property type="match status" value="1"/>
</dbReference>
<dbReference type="SUPFAM" id="SSF56327">
    <property type="entry name" value="LDH C-terminal domain-like"/>
    <property type="match status" value="1"/>
</dbReference>
<dbReference type="SUPFAM" id="SSF51735">
    <property type="entry name" value="NAD(P)-binding Rossmann-fold domains"/>
    <property type="match status" value="1"/>
</dbReference>
<accession>Q822E9</accession>